<reference key="1">
    <citation type="submission" date="2009-02" db="EMBL/GenBank/DDBJ databases">
        <title>Vibrio splendidus str. LGP32 complete genome.</title>
        <authorList>
            <person name="Mazel D."/>
            <person name="Le Roux F."/>
        </authorList>
    </citation>
    <scope>NUCLEOTIDE SEQUENCE [LARGE SCALE GENOMIC DNA]</scope>
    <source>
        <strain>LGP32</strain>
    </source>
</reference>
<gene>
    <name evidence="2" type="primary">infB</name>
    <name type="ordered locus">VS_2482</name>
</gene>
<evidence type="ECO:0000250" key="1"/>
<evidence type="ECO:0000255" key="2">
    <source>
        <dbReference type="HAMAP-Rule" id="MF_00100"/>
    </source>
</evidence>
<evidence type="ECO:0000256" key="3">
    <source>
        <dbReference type="SAM" id="MobiDB-lite"/>
    </source>
</evidence>
<protein>
    <recommendedName>
        <fullName evidence="2">Translation initiation factor IF-2</fullName>
    </recommendedName>
</protein>
<organism>
    <name type="scientific">Vibrio atlanticus (strain LGP32)</name>
    <name type="common">Vibrio splendidus (strain Mel32)</name>
    <dbReference type="NCBI Taxonomy" id="575788"/>
    <lineage>
        <taxon>Bacteria</taxon>
        <taxon>Pseudomonadati</taxon>
        <taxon>Pseudomonadota</taxon>
        <taxon>Gammaproteobacteria</taxon>
        <taxon>Vibrionales</taxon>
        <taxon>Vibrionaceae</taxon>
        <taxon>Vibrio</taxon>
    </lineage>
</organism>
<accession>B7VJH7</accession>
<keyword id="KW-0963">Cytoplasm</keyword>
<keyword id="KW-0342">GTP-binding</keyword>
<keyword id="KW-0396">Initiation factor</keyword>
<keyword id="KW-0547">Nucleotide-binding</keyword>
<keyword id="KW-0648">Protein biosynthesis</keyword>
<proteinExistence type="inferred from homology"/>
<feature type="chain" id="PRO_1000190643" description="Translation initiation factor IF-2">
    <location>
        <begin position="1"/>
        <end position="896"/>
    </location>
</feature>
<feature type="domain" description="tr-type G">
    <location>
        <begin position="395"/>
        <end position="564"/>
    </location>
</feature>
<feature type="region of interest" description="Disordered" evidence="3">
    <location>
        <begin position="49"/>
        <end position="310"/>
    </location>
</feature>
<feature type="region of interest" description="G1" evidence="1">
    <location>
        <begin position="404"/>
        <end position="411"/>
    </location>
</feature>
<feature type="region of interest" description="G2" evidence="1">
    <location>
        <begin position="429"/>
        <end position="433"/>
    </location>
</feature>
<feature type="region of interest" description="G3" evidence="1">
    <location>
        <begin position="450"/>
        <end position="453"/>
    </location>
</feature>
<feature type="region of interest" description="G4" evidence="1">
    <location>
        <begin position="504"/>
        <end position="507"/>
    </location>
</feature>
<feature type="region of interest" description="G5" evidence="1">
    <location>
        <begin position="540"/>
        <end position="542"/>
    </location>
</feature>
<feature type="compositionally biased region" description="Polar residues" evidence="3">
    <location>
        <begin position="57"/>
        <end position="66"/>
    </location>
</feature>
<feature type="compositionally biased region" description="Basic and acidic residues" evidence="3">
    <location>
        <begin position="101"/>
        <end position="174"/>
    </location>
</feature>
<feature type="compositionally biased region" description="Basic and acidic residues" evidence="3">
    <location>
        <begin position="184"/>
        <end position="240"/>
    </location>
</feature>
<feature type="compositionally biased region" description="Basic and acidic residues" evidence="3">
    <location>
        <begin position="250"/>
        <end position="263"/>
    </location>
</feature>
<feature type="compositionally biased region" description="Basic residues" evidence="3">
    <location>
        <begin position="284"/>
        <end position="295"/>
    </location>
</feature>
<feature type="binding site" evidence="2">
    <location>
        <begin position="404"/>
        <end position="411"/>
    </location>
    <ligand>
        <name>GTP</name>
        <dbReference type="ChEBI" id="CHEBI:37565"/>
    </ligand>
</feature>
<feature type="binding site" evidence="2">
    <location>
        <begin position="450"/>
        <end position="454"/>
    </location>
    <ligand>
        <name>GTP</name>
        <dbReference type="ChEBI" id="CHEBI:37565"/>
    </ligand>
</feature>
<feature type="binding site" evidence="2">
    <location>
        <begin position="504"/>
        <end position="507"/>
    </location>
    <ligand>
        <name>GTP</name>
        <dbReference type="ChEBI" id="CHEBI:37565"/>
    </ligand>
</feature>
<comment type="function">
    <text evidence="2">One of the essential components for the initiation of protein synthesis. Protects formylmethionyl-tRNA from spontaneous hydrolysis and promotes its binding to the 30S ribosomal subunits. Also involved in the hydrolysis of GTP during the formation of the 70S ribosomal complex.</text>
</comment>
<comment type="subcellular location">
    <subcellularLocation>
        <location evidence="2">Cytoplasm</location>
    </subcellularLocation>
</comment>
<comment type="similarity">
    <text evidence="2">Belongs to the TRAFAC class translation factor GTPase superfamily. Classic translation factor GTPase family. IF-2 subfamily.</text>
</comment>
<sequence length="896" mass="97525">MTQLTVKALSEEIGTPVDRLIEQLADAGMKKAGSDQVTDSEKQTLLTHLKKEHGDTSGETEPTRLTLQRKTRSTLSVAAGGGKSKDVQVEVRKKRTYVKRSTIEDEAKREAEEVANREAEEKAQRDAEEQAKRDAAEKAQREAEAKVTREADAKREAEEKAQRAQAEKAKKDMNSKNADANAQAKKEADELKARQEQEATRKAEAEAAKLVEEARKLAEENQERWSEEEKKKKEQEKSADYHVTTSTYAREAEDAADKKDEKAPRRRKKKPAPATQPGNNRGGRNQRGRGGKGKLAKPTSMQQGFDKSATVAKSDVAIGETIVVSELASKMSVKATEVIKVMMKMGAMATINQVIDQETAQLVAEEMGHKVILRKENELEEAVLADRDSDAIAEGRAPVVTIMGHVDHGKTSTLDYIRKAHVASGEAGGITQHIGAYHVDTDNGMITFLDTPGHAAFTAMRARGAQATDIVVLVVAADDGVMPQTIEAIQHAKAAGVPLIVAVNKIDKEGANPDNVKNELAQYDVIPEEWGGENIFVHISAKQGTNIDGLLESILLQSEVLELTAVKEGMASGVVVESRLDKGRGPVATVLVQSGTLNKGDIVLCGQEYGRVRAMRDENGKDIETAGPSIPVEILGLSGVPASGDEATVVRDERKAREVANYRQGKFRDVKLARQQKAKLENMFANMTAGEVAELNVVLKADVQGSVEAIADSLLKLSTDEVKVNIVGSGVGGITETDATLAAASNAIILGFNVRADATARNTVQNENLDLRYYSIIYQLIDEVKQAMGGMLAPEFRQEIIGLAQVRDVFKSPKLGAIAGCIVTEGTIKRSNPIRVLRENVVIYEGELESLRRFKDDVQEVKNGYECGVGVKNYNDVRVGDQIEVFEIVEVKRTLD</sequence>
<name>IF2_VIBA3</name>
<dbReference type="EMBL" id="FM954972">
    <property type="protein sequence ID" value="CAV19641.1"/>
    <property type="molecule type" value="Genomic_DNA"/>
</dbReference>
<dbReference type="SMR" id="B7VJH7"/>
<dbReference type="STRING" id="575788.VS_2482"/>
<dbReference type="KEGG" id="vsp:VS_2482"/>
<dbReference type="eggNOG" id="COG0532">
    <property type="taxonomic scope" value="Bacteria"/>
</dbReference>
<dbReference type="HOGENOM" id="CLU_006301_6_3_6"/>
<dbReference type="Proteomes" id="UP000009100">
    <property type="component" value="Chromosome 1"/>
</dbReference>
<dbReference type="GO" id="GO:0005829">
    <property type="term" value="C:cytosol"/>
    <property type="evidence" value="ECO:0007669"/>
    <property type="project" value="TreeGrafter"/>
</dbReference>
<dbReference type="GO" id="GO:0005525">
    <property type="term" value="F:GTP binding"/>
    <property type="evidence" value="ECO:0007669"/>
    <property type="project" value="UniProtKB-KW"/>
</dbReference>
<dbReference type="GO" id="GO:0003924">
    <property type="term" value="F:GTPase activity"/>
    <property type="evidence" value="ECO:0007669"/>
    <property type="project" value="UniProtKB-UniRule"/>
</dbReference>
<dbReference type="GO" id="GO:0097216">
    <property type="term" value="F:guanosine tetraphosphate binding"/>
    <property type="evidence" value="ECO:0007669"/>
    <property type="project" value="UniProtKB-ARBA"/>
</dbReference>
<dbReference type="GO" id="GO:0003743">
    <property type="term" value="F:translation initiation factor activity"/>
    <property type="evidence" value="ECO:0007669"/>
    <property type="project" value="UniProtKB-UniRule"/>
</dbReference>
<dbReference type="CDD" id="cd01887">
    <property type="entry name" value="IF2_eIF5B"/>
    <property type="match status" value="1"/>
</dbReference>
<dbReference type="CDD" id="cd03702">
    <property type="entry name" value="IF2_mtIF2_II"/>
    <property type="match status" value="1"/>
</dbReference>
<dbReference type="CDD" id="cd03692">
    <property type="entry name" value="mtIF2_IVc"/>
    <property type="match status" value="1"/>
</dbReference>
<dbReference type="FunFam" id="2.40.30.10:FF:000007">
    <property type="entry name" value="Translation initiation factor IF-2"/>
    <property type="match status" value="1"/>
</dbReference>
<dbReference type="FunFam" id="2.40.30.10:FF:000008">
    <property type="entry name" value="Translation initiation factor IF-2"/>
    <property type="match status" value="1"/>
</dbReference>
<dbReference type="FunFam" id="3.40.50.10050:FF:000001">
    <property type="entry name" value="Translation initiation factor IF-2"/>
    <property type="match status" value="1"/>
</dbReference>
<dbReference type="FunFam" id="3.40.50.300:FF:000019">
    <property type="entry name" value="Translation initiation factor IF-2"/>
    <property type="match status" value="1"/>
</dbReference>
<dbReference type="Gene3D" id="3.40.50.300">
    <property type="entry name" value="P-loop containing nucleotide triphosphate hydrolases"/>
    <property type="match status" value="1"/>
</dbReference>
<dbReference type="Gene3D" id="3.30.56.50">
    <property type="entry name" value="Putative DNA-binding domain, N-terminal subdomain of bacterial translation initiation factor IF2"/>
    <property type="match status" value="1"/>
</dbReference>
<dbReference type="Gene3D" id="2.40.30.10">
    <property type="entry name" value="Translation factors"/>
    <property type="match status" value="2"/>
</dbReference>
<dbReference type="Gene3D" id="3.40.50.10050">
    <property type="entry name" value="Translation initiation factor IF- 2, domain 3"/>
    <property type="match status" value="1"/>
</dbReference>
<dbReference type="HAMAP" id="MF_00100_B">
    <property type="entry name" value="IF_2_B"/>
    <property type="match status" value="1"/>
</dbReference>
<dbReference type="InterPro" id="IPR009061">
    <property type="entry name" value="DNA-bd_dom_put_sf"/>
</dbReference>
<dbReference type="InterPro" id="IPR053905">
    <property type="entry name" value="EF-G-like_DII"/>
</dbReference>
<dbReference type="InterPro" id="IPR004161">
    <property type="entry name" value="EFTu-like_2"/>
</dbReference>
<dbReference type="InterPro" id="IPR013575">
    <property type="entry name" value="IF2_assoc_dom_bac"/>
</dbReference>
<dbReference type="InterPro" id="IPR044145">
    <property type="entry name" value="IF2_II"/>
</dbReference>
<dbReference type="InterPro" id="IPR006847">
    <property type="entry name" value="IF2_N"/>
</dbReference>
<dbReference type="InterPro" id="IPR027417">
    <property type="entry name" value="P-loop_NTPase"/>
</dbReference>
<dbReference type="InterPro" id="IPR005225">
    <property type="entry name" value="Small_GTP-bd"/>
</dbReference>
<dbReference type="InterPro" id="IPR000795">
    <property type="entry name" value="T_Tr_GTP-bd_dom"/>
</dbReference>
<dbReference type="InterPro" id="IPR000178">
    <property type="entry name" value="TF_IF2_bacterial-like"/>
</dbReference>
<dbReference type="InterPro" id="IPR015760">
    <property type="entry name" value="TIF_IF2"/>
</dbReference>
<dbReference type="InterPro" id="IPR023115">
    <property type="entry name" value="TIF_IF2_dom3"/>
</dbReference>
<dbReference type="InterPro" id="IPR036925">
    <property type="entry name" value="TIF_IF2_dom3_sf"/>
</dbReference>
<dbReference type="InterPro" id="IPR009000">
    <property type="entry name" value="Transl_B-barrel_sf"/>
</dbReference>
<dbReference type="NCBIfam" id="TIGR00487">
    <property type="entry name" value="IF-2"/>
    <property type="match status" value="1"/>
</dbReference>
<dbReference type="NCBIfam" id="TIGR00231">
    <property type="entry name" value="small_GTP"/>
    <property type="match status" value="1"/>
</dbReference>
<dbReference type="PANTHER" id="PTHR43381:SF5">
    <property type="entry name" value="TR-TYPE G DOMAIN-CONTAINING PROTEIN"/>
    <property type="match status" value="1"/>
</dbReference>
<dbReference type="PANTHER" id="PTHR43381">
    <property type="entry name" value="TRANSLATION INITIATION FACTOR IF-2-RELATED"/>
    <property type="match status" value="1"/>
</dbReference>
<dbReference type="Pfam" id="PF22042">
    <property type="entry name" value="EF-G_D2"/>
    <property type="match status" value="1"/>
</dbReference>
<dbReference type="Pfam" id="PF00009">
    <property type="entry name" value="GTP_EFTU"/>
    <property type="match status" value="1"/>
</dbReference>
<dbReference type="Pfam" id="PF03144">
    <property type="entry name" value="GTP_EFTU_D2"/>
    <property type="match status" value="1"/>
</dbReference>
<dbReference type="Pfam" id="PF11987">
    <property type="entry name" value="IF-2"/>
    <property type="match status" value="1"/>
</dbReference>
<dbReference type="Pfam" id="PF08364">
    <property type="entry name" value="IF2_assoc"/>
    <property type="match status" value="1"/>
</dbReference>
<dbReference type="Pfam" id="PF04760">
    <property type="entry name" value="IF2_N"/>
    <property type="match status" value="2"/>
</dbReference>
<dbReference type="SUPFAM" id="SSF52156">
    <property type="entry name" value="Initiation factor IF2/eIF5b, domain 3"/>
    <property type="match status" value="1"/>
</dbReference>
<dbReference type="SUPFAM" id="SSF52540">
    <property type="entry name" value="P-loop containing nucleoside triphosphate hydrolases"/>
    <property type="match status" value="1"/>
</dbReference>
<dbReference type="SUPFAM" id="SSF46955">
    <property type="entry name" value="Putative DNA-binding domain"/>
    <property type="match status" value="1"/>
</dbReference>
<dbReference type="SUPFAM" id="SSF50447">
    <property type="entry name" value="Translation proteins"/>
    <property type="match status" value="2"/>
</dbReference>
<dbReference type="PROSITE" id="PS51722">
    <property type="entry name" value="G_TR_2"/>
    <property type="match status" value="1"/>
</dbReference>
<dbReference type="PROSITE" id="PS01176">
    <property type="entry name" value="IF2"/>
    <property type="match status" value="1"/>
</dbReference>